<proteinExistence type="evidence at protein level"/>
<protein>
    <recommendedName>
        <fullName>Free fatty acid receptor 3</fullName>
    </recommendedName>
    <alternativeName>
        <fullName>G-protein coupled receptor 41</fullName>
    </alternativeName>
</protein>
<dbReference type="EMBL" id="AABR06004309">
    <property type="status" value="NOT_ANNOTATED_CDS"/>
    <property type="molecule type" value="Genomic_DNA"/>
</dbReference>
<dbReference type="EMBL" id="CH473979">
    <property type="protein sequence ID" value="EDM07705.1"/>
    <property type="molecule type" value="Genomic_DNA"/>
</dbReference>
<dbReference type="EMBL" id="BC166522">
    <property type="protein sequence ID" value="AAI66522.1"/>
    <property type="molecule type" value="mRNA"/>
</dbReference>
<dbReference type="RefSeq" id="NP_001102382.1">
    <property type="nucleotide sequence ID" value="NM_001108912.1"/>
</dbReference>
<dbReference type="SMR" id="B2GV46"/>
<dbReference type="FunCoup" id="B2GV46">
    <property type="interactions" value="19"/>
</dbReference>
<dbReference type="STRING" id="10116.ENSRNOP00000053557"/>
<dbReference type="BindingDB" id="B2GV46"/>
<dbReference type="ChEMBL" id="CHEMBL3886125"/>
<dbReference type="DrugCentral" id="B2GV46"/>
<dbReference type="PaxDb" id="10116-ENSRNOP00000053557"/>
<dbReference type="Ensembl" id="ENSRNOT00000056714.3">
    <property type="protein sequence ID" value="ENSRNOP00000053557.2"/>
    <property type="gene ID" value="ENSRNOG00000037467.3"/>
</dbReference>
<dbReference type="GeneID" id="365228"/>
<dbReference type="KEGG" id="rno:365228"/>
<dbReference type="UCSC" id="RGD:1311035">
    <property type="organism name" value="rat"/>
</dbReference>
<dbReference type="AGR" id="RGD:1311035"/>
<dbReference type="CTD" id="2865"/>
<dbReference type="RGD" id="1311035">
    <property type="gene designation" value="Ffar3"/>
</dbReference>
<dbReference type="eggNOG" id="ENOG502QQGM">
    <property type="taxonomic scope" value="Eukaryota"/>
</dbReference>
<dbReference type="GeneTree" id="ENSGT00990000203527"/>
<dbReference type="HOGENOM" id="CLU_009579_8_4_1"/>
<dbReference type="InParanoid" id="B2GV46"/>
<dbReference type="OMA" id="HWLYFSV"/>
<dbReference type="OrthoDB" id="5961208at2759"/>
<dbReference type="PhylomeDB" id="B2GV46"/>
<dbReference type="TreeFam" id="TF350010"/>
<dbReference type="Reactome" id="R-RNO-416476">
    <property type="pathway name" value="G alpha (q) signalling events"/>
</dbReference>
<dbReference type="Reactome" id="R-RNO-444209">
    <property type="pathway name" value="Free fatty acid receptors"/>
</dbReference>
<dbReference type="PRO" id="PR:B2GV46"/>
<dbReference type="Proteomes" id="UP000002494">
    <property type="component" value="Chromosome 1"/>
</dbReference>
<dbReference type="Proteomes" id="UP000234681">
    <property type="component" value="Chromosome 1"/>
</dbReference>
<dbReference type="Bgee" id="ENSRNOG00000037467">
    <property type="expression patterns" value="Expressed in jejunum and 4 other cell types or tissues"/>
</dbReference>
<dbReference type="GO" id="GO:0016020">
    <property type="term" value="C:membrane"/>
    <property type="evidence" value="ECO:0000266"/>
    <property type="project" value="RGD"/>
</dbReference>
<dbReference type="GO" id="GO:0005886">
    <property type="term" value="C:plasma membrane"/>
    <property type="evidence" value="ECO:0000250"/>
    <property type="project" value="UniProtKB"/>
</dbReference>
<dbReference type="GO" id="GO:0004930">
    <property type="term" value="F:G protein-coupled receptor activity"/>
    <property type="evidence" value="ECO:0000314"/>
    <property type="project" value="UniProtKB"/>
</dbReference>
<dbReference type="GO" id="GO:0008289">
    <property type="term" value="F:lipid binding"/>
    <property type="evidence" value="ECO:0007669"/>
    <property type="project" value="UniProtKB-KW"/>
</dbReference>
<dbReference type="GO" id="GO:0007193">
    <property type="term" value="P:adenylate cyclase-inhibiting G protein-coupled receptor signaling pathway"/>
    <property type="evidence" value="ECO:0000250"/>
    <property type="project" value="UniProtKB"/>
</dbReference>
<dbReference type="GO" id="GO:0071398">
    <property type="term" value="P:cellular response to fatty acid"/>
    <property type="evidence" value="ECO:0000314"/>
    <property type="project" value="UniProtKB"/>
</dbReference>
<dbReference type="GO" id="GO:0007186">
    <property type="term" value="P:G protein-coupled receptor signaling pathway"/>
    <property type="evidence" value="ECO:0000314"/>
    <property type="project" value="UniProtKB"/>
</dbReference>
<dbReference type="GO" id="GO:0042593">
    <property type="term" value="P:glucose homeostasis"/>
    <property type="evidence" value="ECO:0000266"/>
    <property type="project" value="RGD"/>
</dbReference>
<dbReference type="GO" id="GO:0006954">
    <property type="term" value="P:inflammatory response"/>
    <property type="evidence" value="ECO:0007669"/>
    <property type="project" value="UniProtKB-KW"/>
</dbReference>
<dbReference type="GO" id="GO:0002385">
    <property type="term" value="P:mucosal immune response"/>
    <property type="evidence" value="ECO:0000250"/>
    <property type="project" value="UniProtKB"/>
</dbReference>
<dbReference type="GO" id="GO:0045776">
    <property type="term" value="P:negative regulation of blood pressure"/>
    <property type="evidence" value="ECO:0000250"/>
    <property type="project" value="UniProtKB"/>
</dbReference>
<dbReference type="GO" id="GO:0046676">
    <property type="term" value="P:negative regulation of insulin secretion"/>
    <property type="evidence" value="ECO:0000266"/>
    <property type="project" value="RGD"/>
</dbReference>
<dbReference type="GO" id="GO:0019228">
    <property type="term" value="P:neuronal action potential"/>
    <property type="evidence" value="ECO:0000266"/>
    <property type="project" value="RGD"/>
</dbReference>
<dbReference type="GO" id="GO:0002879">
    <property type="term" value="P:positive regulation of acute inflammatory response to non-antigenic stimulus"/>
    <property type="evidence" value="ECO:0000250"/>
    <property type="project" value="UniProtKB"/>
</dbReference>
<dbReference type="GO" id="GO:0032722">
    <property type="term" value="P:positive regulation of chemokine production"/>
    <property type="evidence" value="ECO:0000250"/>
    <property type="project" value="UniProtKB"/>
</dbReference>
<dbReference type="GO" id="GO:0002720">
    <property type="term" value="P:positive regulation of cytokine production involved in immune response"/>
    <property type="evidence" value="ECO:0000250"/>
    <property type="project" value="UniProtKB"/>
</dbReference>
<dbReference type="GO" id="GO:1904457">
    <property type="term" value="P:positive regulation of neuronal action potential"/>
    <property type="evidence" value="ECO:0000266"/>
    <property type="project" value="RGD"/>
</dbReference>
<dbReference type="GO" id="GO:0003062">
    <property type="term" value="P:regulation of heart rate by chemical signal"/>
    <property type="evidence" value="ECO:0000266"/>
    <property type="project" value="RGD"/>
</dbReference>
<dbReference type="GO" id="GO:0046885">
    <property type="term" value="P:regulation of hormone biosynthetic process"/>
    <property type="evidence" value="ECO:0000250"/>
    <property type="project" value="UniProtKB"/>
</dbReference>
<dbReference type="GO" id="GO:0046626">
    <property type="term" value="P:regulation of insulin receptor signaling pathway"/>
    <property type="evidence" value="ECO:0000250"/>
    <property type="project" value="UniProtKB"/>
</dbReference>
<dbReference type="GO" id="GO:0014061">
    <property type="term" value="P:regulation of norepinephrine secretion"/>
    <property type="evidence" value="ECO:0000250"/>
    <property type="project" value="UniProtKB"/>
</dbReference>
<dbReference type="GO" id="GO:0090276">
    <property type="term" value="P:regulation of peptide hormone secretion"/>
    <property type="evidence" value="ECO:0000250"/>
    <property type="project" value="UniProtKB"/>
</dbReference>
<dbReference type="CDD" id="cd15170">
    <property type="entry name" value="7tmA_FFAR2_FFAR3"/>
    <property type="match status" value="1"/>
</dbReference>
<dbReference type="FunFam" id="1.20.1070.10:FF:000173">
    <property type="entry name" value="Free fatty acid receptor 1"/>
    <property type="match status" value="1"/>
</dbReference>
<dbReference type="Gene3D" id="1.20.1070.10">
    <property type="entry name" value="Rhodopsin 7-helix transmembrane proteins"/>
    <property type="match status" value="1"/>
</dbReference>
<dbReference type="InterPro" id="IPR000276">
    <property type="entry name" value="GPCR_Rhodpsn"/>
</dbReference>
<dbReference type="InterPro" id="IPR017452">
    <property type="entry name" value="GPCR_Rhodpsn_7TM"/>
</dbReference>
<dbReference type="InterPro" id="IPR013312">
    <property type="entry name" value="GPR40-rel_orph"/>
</dbReference>
<dbReference type="PANTHER" id="PTHR45822">
    <property type="entry name" value="FREE FATTY ACID RECEPTOR 2-RELATED"/>
    <property type="match status" value="1"/>
</dbReference>
<dbReference type="PANTHER" id="PTHR45822:SF6">
    <property type="entry name" value="FREE FATTY ACID RECEPTOR 3-RELATED"/>
    <property type="match status" value="1"/>
</dbReference>
<dbReference type="Pfam" id="PF00001">
    <property type="entry name" value="7tm_1"/>
    <property type="match status" value="1"/>
</dbReference>
<dbReference type="PRINTS" id="PR00237">
    <property type="entry name" value="GPCRRHODOPSN"/>
</dbReference>
<dbReference type="PRINTS" id="PR01904">
    <property type="entry name" value="GPR40FAMILY"/>
</dbReference>
<dbReference type="SUPFAM" id="SSF81321">
    <property type="entry name" value="Family A G protein-coupled receptor-like"/>
    <property type="match status" value="1"/>
</dbReference>
<dbReference type="PROSITE" id="PS00237">
    <property type="entry name" value="G_PROTEIN_RECEP_F1_1"/>
    <property type="match status" value="1"/>
</dbReference>
<dbReference type="PROSITE" id="PS50262">
    <property type="entry name" value="G_PROTEIN_RECEP_F1_2"/>
    <property type="match status" value="1"/>
</dbReference>
<gene>
    <name type="primary">Ffar3</name>
    <name type="synonym">Gpr41</name>
</gene>
<comment type="function">
    <text evidence="3 4 5">G protein-coupled receptor that is activated by a major product of dietary fiber digestion, the short chain fatty acids (SCFAs), and that plays a role in the regulation of whole-body energy homeostasis and in intestinal immunity. In omnivorous mammals, the short chain fatty acids acetate, propionate and butyrate are produced primarily by the gut microbiome that metabolizes dietary fibers. SCFAs serve as a source of energy but also act as signaling molecules. That G protein-coupled receptor is probably coupled to the pertussis toxin-sensitive, G(i/o)-alpha family of G proteins. Its activation results in the formation of inositol 1,4,5-trisphosphate, the mobilization of intracellular calcium, the phosphorylation of the MAPK3/ERK1 and MAPK1/ERK2 kinases and the inhibition of intracellular cAMP accumulation. Activated by SCFAs and by beta-hydroxybutyrate, a ketone body produced by the liver upon starvation, it inhibits N-type calcium channels and modulates the activity of sympathetic neurons through a signaling cascade involving the beta and gamma subunits of its coupled G protein, phospholipase C and MAP kinases (PubMed:24305827). Thereby, it may regulate energy expenditure through the control of the sympathetic nervous system that controls for instance heart rate. Upon activation by SCFAs accumulating in the intestine, it may also signal to the brain via neural circuits which in turn would regulate intestinal gluconeogenesis (PubMed:24412651). May also control the production of hormones involved in whole-body energy homeostasis. May for instance, regulate blood pressure through renin secretion. May also regulate secretion of the PYY peptide by enteroendocrine cells and control gut motility, intestinal transit rate, and the harvesting of energy from SCFAs produced by gut microbiota. May also indirectly regulate the production of LEP/Leptin, a hormone acting on the CNS to inhibit food intake, in response to the presence of short-chain fatty acids in the intestine. Finally, may also play a role in glucose homeostasis. Besides its role in energy homeostasis, may play a role in intestinal immunity. May mediate the activation of the inflammatory and immune response by SCFAs in the gut, regulating the rapid production of chemokines and cytokines by intestinal epithelial cells.</text>
</comment>
<comment type="subcellular location">
    <subcellularLocation>
        <location evidence="6">Cell membrane</location>
        <topology evidence="6">Multi-pass membrane protein</topology>
    </subcellularLocation>
</comment>
<comment type="tissue specificity">
    <text evidence="4">Expressed in the sympathetic nervous system.</text>
</comment>
<comment type="similarity">
    <text evidence="2">Belongs to the G-protein coupled receptor 1 family.</text>
</comment>
<feature type="chain" id="PRO_0000430312" description="Free fatty acid receptor 3">
    <location>
        <begin position="1"/>
        <end position="319"/>
    </location>
</feature>
<feature type="topological domain" description="Extracellular" evidence="1">
    <location>
        <begin position="1"/>
        <end position="15"/>
    </location>
</feature>
<feature type="transmembrane region" description="Helical; Name=1" evidence="1">
    <location>
        <begin position="16"/>
        <end position="36"/>
    </location>
</feature>
<feature type="topological domain" description="Cytoplasmic" evidence="1">
    <location>
        <begin position="37"/>
        <end position="43"/>
    </location>
</feature>
<feature type="transmembrane region" description="Helical; Name=2" evidence="1">
    <location>
        <begin position="44"/>
        <end position="64"/>
    </location>
</feature>
<feature type="topological domain" description="Extracellular" evidence="1">
    <location>
        <begin position="65"/>
        <end position="98"/>
    </location>
</feature>
<feature type="transmembrane region" description="Helical; Name=3" evidence="1">
    <location>
        <begin position="99"/>
        <end position="119"/>
    </location>
</feature>
<feature type="topological domain" description="Cytoplasmic" evidence="1">
    <location>
        <begin position="120"/>
        <end position="127"/>
    </location>
</feature>
<feature type="transmembrane region" description="Helical; Name=4" evidence="1">
    <location>
        <begin position="128"/>
        <end position="148"/>
    </location>
</feature>
<feature type="topological domain" description="Extracellular" evidence="1">
    <location>
        <begin position="149"/>
        <end position="183"/>
    </location>
</feature>
<feature type="transmembrane region" description="Helical; Name=5" evidence="1">
    <location>
        <begin position="184"/>
        <end position="206"/>
    </location>
</feature>
<feature type="topological domain" description="Cytoplasmic" evidence="1">
    <location>
        <begin position="207"/>
        <end position="218"/>
    </location>
</feature>
<feature type="transmembrane region" description="Helical; Name=6" evidence="1">
    <location>
        <begin position="219"/>
        <end position="239"/>
    </location>
</feature>
<feature type="topological domain" description="Extracellular" evidence="1">
    <location>
        <begin position="240"/>
        <end position="254"/>
    </location>
</feature>
<feature type="transmembrane region" description="Helical; Name=7" evidence="1">
    <location>
        <begin position="255"/>
        <end position="275"/>
    </location>
</feature>
<feature type="topological domain" description="Cytoplasmic" evidence="1">
    <location>
        <begin position="276"/>
        <end position="319"/>
    </location>
</feature>
<feature type="disulfide bond" evidence="2">
    <location>
        <begin position="84"/>
        <end position="165"/>
    </location>
</feature>
<feature type="mutagenesis site" description="No effect on activation by propionate." evidence="3">
    <original>R</original>
    <variation>Q</variation>
    <location>
        <position position="40"/>
    </location>
</feature>
<feature type="mutagenesis site" description="No effect on activation by propionate." evidence="3">
    <original>R</original>
    <variation>C</variation>
    <location>
        <position position="41"/>
    </location>
</feature>
<feature type="mutagenesis site" description="Loss of activation by propionate." evidence="3">
    <original>R</original>
    <variation>W</variation>
    <location>
        <position position="170"/>
    </location>
</feature>
<feature type="mutagenesis site" description="Constitutively active." evidence="3">
    <original>L</original>
    <variation>V</variation>
    <location>
        <position position="223"/>
    </location>
</feature>
<feature type="mutagenesis site" description="Reduced activation by propionate." evidence="3">
    <original>T</original>
    <variation>V</variation>
    <location>
        <position position="252"/>
    </location>
</feature>
<keyword id="KW-1003">Cell membrane</keyword>
<keyword id="KW-1015">Disulfide bond</keyword>
<keyword id="KW-0297">G-protein coupled receptor</keyword>
<keyword id="KW-0391">Immunity</keyword>
<keyword id="KW-0395">Inflammatory response</keyword>
<keyword id="KW-0446">Lipid-binding</keyword>
<keyword id="KW-0472">Membrane</keyword>
<keyword id="KW-0675">Receptor</keyword>
<keyword id="KW-1185">Reference proteome</keyword>
<keyword id="KW-0807">Transducer</keyword>
<keyword id="KW-0812">Transmembrane</keyword>
<keyword id="KW-1133">Transmembrane helix</keyword>
<sequence length="319" mass="36483">MDTSFFPGNHWLFFSVDLLVFLVGLPLNVMALVVFVNKLRRRPVAVDLLLLNLTISDLLLLLFLPFRIVEAACGMKWILPFIFCPLSGFLFFTTIYLTSLFLMTVSIERFLSVAYPLWYKTRPRLAQAGLVSGICWFLASAHCSVIYVTEYWGNATYSQGTNGTCYLEFREDQLAILLPVRLEMAVVLFMVPLCITSYCYSRLVWILSQGASRRRRKRVMGLLVATLLIFFVCFGPYNMSHVVGYVRGESPTWRSYVLLLSTLNSCIDPLVFYFSSSKFQADFHQLLSRLIRACVPWTQEVSLELKVKNGEEPSKECPS</sequence>
<organism>
    <name type="scientific">Rattus norvegicus</name>
    <name type="common">Rat</name>
    <dbReference type="NCBI Taxonomy" id="10116"/>
    <lineage>
        <taxon>Eukaryota</taxon>
        <taxon>Metazoa</taxon>
        <taxon>Chordata</taxon>
        <taxon>Craniata</taxon>
        <taxon>Vertebrata</taxon>
        <taxon>Euteleostomi</taxon>
        <taxon>Mammalia</taxon>
        <taxon>Eutheria</taxon>
        <taxon>Euarchontoglires</taxon>
        <taxon>Glires</taxon>
        <taxon>Rodentia</taxon>
        <taxon>Myomorpha</taxon>
        <taxon>Muroidea</taxon>
        <taxon>Muridae</taxon>
        <taxon>Murinae</taxon>
        <taxon>Rattus</taxon>
    </lineage>
</organism>
<evidence type="ECO:0000255" key="1"/>
<evidence type="ECO:0000255" key="2">
    <source>
        <dbReference type="PROSITE-ProRule" id="PRU00521"/>
    </source>
</evidence>
<evidence type="ECO:0000269" key="3">
    <source>
    </source>
</evidence>
<evidence type="ECO:0000269" key="4">
    <source>
    </source>
</evidence>
<evidence type="ECO:0000269" key="5">
    <source>
    </source>
</evidence>
<evidence type="ECO:0000305" key="6"/>
<accession>B2GV46</accession>
<reference key="1">
    <citation type="journal article" date="2004" name="Nature">
        <title>Genome sequence of the Brown Norway rat yields insights into mammalian evolution.</title>
        <authorList>
            <person name="Gibbs R.A."/>
            <person name="Weinstock G.M."/>
            <person name="Metzker M.L."/>
            <person name="Muzny D.M."/>
            <person name="Sodergren E.J."/>
            <person name="Scherer S."/>
            <person name="Scott G."/>
            <person name="Steffen D."/>
            <person name="Worley K.C."/>
            <person name="Burch P.E."/>
            <person name="Okwuonu G."/>
            <person name="Hines S."/>
            <person name="Lewis L."/>
            <person name="Deramo C."/>
            <person name="Delgado O."/>
            <person name="Dugan-Rocha S."/>
            <person name="Miner G."/>
            <person name="Morgan M."/>
            <person name="Hawes A."/>
            <person name="Gill R."/>
            <person name="Holt R.A."/>
            <person name="Adams M.D."/>
            <person name="Amanatides P.G."/>
            <person name="Baden-Tillson H."/>
            <person name="Barnstead M."/>
            <person name="Chin S."/>
            <person name="Evans C.A."/>
            <person name="Ferriera S."/>
            <person name="Fosler C."/>
            <person name="Glodek A."/>
            <person name="Gu Z."/>
            <person name="Jennings D."/>
            <person name="Kraft C.L."/>
            <person name="Nguyen T."/>
            <person name="Pfannkoch C.M."/>
            <person name="Sitter C."/>
            <person name="Sutton G.G."/>
            <person name="Venter J.C."/>
            <person name="Woodage T."/>
            <person name="Smith D."/>
            <person name="Lee H.-M."/>
            <person name="Gustafson E."/>
            <person name="Cahill P."/>
            <person name="Kana A."/>
            <person name="Doucette-Stamm L."/>
            <person name="Weinstock K."/>
            <person name="Fechtel K."/>
            <person name="Weiss R.B."/>
            <person name="Dunn D.M."/>
            <person name="Green E.D."/>
            <person name="Blakesley R.W."/>
            <person name="Bouffard G.G."/>
            <person name="De Jong P.J."/>
            <person name="Osoegawa K."/>
            <person name="Zhu B."/>
            <person name="Marra M."/>
            <person name="Schein J."/>
            <person name="Bosdet I."/>
            <person name="Fjell C."/>
            <person name="Jones S."/>
            <person name="Krzywinski M."/>
            <person name="Mathewson C."/>
            <person name="Siddiqui A."/>
            <person name="Wye N."/>
            <person name="McPherson J."/>
            <person name="Zhao S."/>
            <person name="Fraser C.M."/>
            <person name="Shetty J."/>
            <person name="Shatsman S."/>
            <person name="Geer K."/>
            <person name="Chen Y."/>
            <person name="Abramzon S."/>
            <person name="Nierman W.C."/>
            <person name="Havlak P.H."/>
            <person name="Chen R."/>
            <person name="Durbin K.J."/>
            <person name="Egan A."/>
            <person name="Ren Y."/>
            <person name="Song X.-Z."/>
            <person name="Li B."/>
            <person name="Liu Y."/>
            <person name="Qin X."/>
            <person name="Cawley S."/>
            <person name="Cooney A.J."/>
            <person name="D'Souza L.M."/>
            <person name="Martin K."/>
            <person name="Wu J.Q."/>
            <person name="Gonzalez-Garay M.L."/>
            <person name="Jackson A.R."/>
            <person name="Kalafus K.J."/>
            <person name="McLeod M.P."/>
            <person name="Milosavljevic A."/>
            <person name="Virk D."/>
            <person name="Volkov A."/>
            <person name="Wheeler D.A."/>
            <person name="Zhang Z."/>
            <person name="Bailey J.A."/>
            <person name="Eichler E.E."/>
            <person name="Tuzun E."/>
            <person name="Birney E."/>
            <person name="Mongin E."/>
            <person name="Ureta-Vidal A."/>
            <person name="Woodwark C."/>
            <person name="Zdobnov E."/>
            <person name="Bork P."/>
            <person name="Suyama M."/>
            <person name="Torrents D."/>
            <person name="Alexandersson M."/>
            <person name="Trask B.J."/>
            <person name="Young J.M."/>
            <person name="Huang H."/>
            <person name="Wang H."/>
            <person name="Xing H."/>
            <person name="Daniels S."/>
            <person name="Gietzen D."/>
            <person name="Schmidt J."/>
            <person name="Stevens K."/>
            <person name="Vitt U."/>
            <person name="Wingrove J."/>
            <person name="Camara F."/>
            <person name="Mar Alba M."/>
            <person name="Abril J.F."/>
            <person name="Guigo R."/>
            <person name="Smit A."/>
            <person name="Dubchak I."/>
            <person name="Rubin E.M."/>
            <person name="Couronne O."/>
            <person name="Poliakov A."/>
            <person name="Huebner N."/>
            <person name="Ganten D."/>
            <person name="Goesele C."/>
            <person name="Hummel O."/>
            <person name="Kreitler T."/>
            <person name="Lee Y.-A."/>
            <person name="Monti J."/>
            <person name="Schulz H."/>
            <person name="Zimdahl H."/>
            <person name="Himmelbauer H."/>
            <person name="Lehrach H."/>
            <person name="Jacob H.J."/>
            <person name="Bromberg S."/>
            <person name="Gullings-Handley J."/>
            <person name="Jensen-Seaman M.I."/>
            <person name="Kwitek A.E."/>
            <person name="Lazar J."/>
            <person name="Pasko D."/>
            <person name="Tonellato P.J."/>
            <person name="Twigger S."/>
            <person name="Ponting C.P."/>
            <person name="Duarte J.M."/>
            <person name="Rice S."/>
            <person name="Goodstadt L."/>
            <person name="Beatson S.A."/>
            <person name="Emes R.D."/>
            <person name="Winter E.E."/>
            <person name="Webber C."/>
            <person name="Brandt P."/>
            <person name="Nyakatura G."/>
            <person name="Adetobi M."/>
            <person name="Chiaromonte F."/>
            <person name="Elnitski L."/>
            <person name="Eswara P."/>
            <person name="Hardison R.C."/>
            <person name="Hou M."/>
            <person name="Kolbe D."/>
            <person name="Makova K."/>
            <person name="Miller W."/>
            <person name="Nekrutenko A."/>
            <person name="Riemer C."/>
            <person name="Schwartz S."/>
            <person name="Taylor J."/>
            <person name="Yang S."/>
            <person name="Zhang Y."/>
            <person name="Lindpaintner K."/>
            <person name="Andrews T.D."/>
            <person name="Caccamo M."/>
            <person name="Clamp M."/>
            <person name="Clarke L."/>
            <person name="Curwen V."/>
            <person name="Durbin R.M."/>
            <person name="Eyras E."/>
            <person name="Searle S.M."/>
            <person name="Cooper G.M."/>
            <person name="Batzoglou S."/>
            <person name="Brudno M."/>
            <person name="Sidow A."/>
            <person name="Stone E.A."/>
            <person name="Payseur B.A."/>
            <person name="Bourque G."/>
            <person name="Lopez-Otin C."/>
            <person name="Puente X.S."/>
            <person name="Chakrabarti K."/>
            <person name="Chatterji S."/>
            <person name="Dewey C."/>
            <person name="Pachter L."/>
            <person name="Bray N."/>
            <person name="Yap V.B."/>
            <person name="Caspi A."/>
            <person name="Tesler G."/>
            <person name="Pevzner P.A."/>
            <person name="Haussler D."/>
            <person name="Roskin K.M."/>
            <person name="Baertsch R."/>
            <person name="Clawson H."/>
            <person name="Furey T.S."/>
            <person name="Hinrichs A.S."/>
            <person name="Karolchik D."/>
            <person name="Kent W.J."/>
            <person name="Rosenbloom K.R."/>
            <person name="Trumbower H."/>
            <person name="Weirauch M."/>
            <person name="Cooper D.N."/>
            <person name="Stenson P.D."/>
            <person name="Ma B."/>
            <person name="Brent M."/>
            <person name="Arumugam M."/>
            <person name="Shteynberg D."/>
            <person name="Copley R.R."/>
            <person name="Taylor M.S."/>
            <person name="Riethman H."/>
            <person name="Mudunuri U."/>
            <person name="Peterson J."/>
            <person name="Guyer M."/>
            <person name="Felsenfeld A."/>
            <person name="Old S."/>
            <person name="Mockrin S."/>
            <person name="Collins F.S."/>
        </authorList>
    </citation>
    <scope>NUCLEOTIDE SEQUENCE [LARGE SCALE GENOMIC DNA]</scope>
    <source>
        <strain>Brown Norway</strain>
    </source>
</reference>
<reference key="2">
    <citation type="submission" date="2005-09" db="EMBL/GenBank/DDBJ databases">
        <authorList>
            <person name="Mural R.J."/>
            <person name="Adams M.D."/>
            <person name="Myers E.W."/>
            <person name="Smith H.O."/>
            <person name="Venter J.C."/>
        </authorList>
    </citation>
    <scope>NUCLEOTIDE SEQUENCE [LARGE SCALE GENOMIC DNA]</scope>
</reference>
<reference key="3">
    <citation type="journal article" date="2004" name="Genome Res.">
        <title>The status, quality, and expansion of the NIH full-length cDNA project: the Mammalian Gene Collection (MGC).</title>
        <authorList>
            <consortium name="The MGC Project Team"/>
        </authorList>
    </citation>
    <scope>NUCLEOTIDE SEQUENCE [LARGE SCALE MRNA]</scope>
    <source>
        <tissue>Testis</tissue>
    </source>
</reference>
<reference key="4">
    <citation type="journal article" date="2003" name="J. Biol. Chem.">
        <title>The orphan G protein-coupled receptors GPR41 and GPR43 are activated by propionate and other short chain carboxylic acids.</title>
        <authorList>
            <person name="Brown A.J."/>
            <person name="Goldsworthy S.M."/>
            <person name="Barnes A.A."/>
            <person name="Eilert M.M."/>
            <person name="Tcheang L."/>
            <person name="Daniels D."/>
            <person name="Muir A.I."/>
            <person name="Wigglesworth M.J."/>
            <person name="Kinghorn I."/>
            <person name="Fraser N.J."/>
            <person name="Pike N.B."/>
            <person name="Strum J.C."/>
            <person name="Steplewski K.M."/>
            <person name="Murdock P.R."/>
            <person name="Holder J.C."/>
            <person name="Marshall F.H."/>
            <person name="Szekeres P.G."/>
            <person name="Wilson S."/>
            <person name="Ignar D.M."/>
            <person name="Foord S.M."/>
            <person name="Wise A."/>
            <person name="Dowell S.J."/>
        </authorList>
    </citation>
    <scope>FUNCTION</scope>
    <scope>MUTAGENESIS OF ARG-40; ARG-41; ARG-170; LEU-223 AND THR-252</scope>
</reference>
<reference key="5">
    <citation type="journal article" date="2013" name="J. Neurosci.">
        <title>beta-Hydroxybutyrate modulates N-type calcium channels in rat sympathetic neurons by acting as an agonist for the G-protein-coupled receptor FFA3.</title>
        <authorList>
            <person name="Won Y.J."/>
            <person name="Lu V.B."/>
            <person name="Puhl H.L. III"/>
            <person name="Ikeda S.R."/>
        </authorList>
    </citation>
    <scope>FUNCTION</scope>
    <scope>TISSUE SPECIFICITY</scope>
</reference>
<reference key="6">
    <citation type="journal article" date="2014" name="Cell">
        <title>Microbiota-generated metabolites promote metabolic benefits via gut-brain neural circuits.</title>
        <authorList>
            <person name="De Vadder F."/>
            <person name="Kovatcheva-Datchary P."/>
            <person name="Goncalves D."/>
            <person name="Vinera J."/>
            <person name="Zitoun C."/>
            <person name="Duchampt A."/>
            <person name="Baeckhed F."/>
            <person name="Mithieux G."/>
        </authorList>
    </citation>
    <scope>FUNCTION</scope>
</reference>
<name>FFAR3_RAT</name>